<reference key="1">
    <citation type="submission" date="2008-12" db="EMBL/GenBank/DDBJ databases">
        <title>Complete sequence of chromosome of Shewanella baltica OS223.</title>
        <authorList>
            <consortium name="US DOE Joint Genome Institute"/>
            <person name="Lucas S."/>
            <person name="Copeland A."/>
            <person name="Lapidus A."/>
            <person name="Glavina del Rio T."/>
            <person name="Dalin E."/>
            <person name="Tice H."/>
            <person name="Bruce D."/>
            <person name="Goodwin L."/>
            <person name="Pitluck S."/>
            <person name="Chertkov O."/>
            <person name="Meincke L."/>
            <person name="Brettin T."/>
            <person name="Detter J.C."/>
            <person name="Han C."/>
            <person name="Kuske C.R."/>
            <person name="Larimer F."/>
            <person name="Land M."/>
            <person name="Hauser L."/>
            <person name="Kyrpides N."/>
            <person name="Ovchinnikova G."/>
            <person name="Brettar I."/>
            <person name="Rodrigues J."/>
            <person name="Konstantinidis K."/>
            <person name="Tiedje J."/>
        </authorList>
    </citation>
    <scope>NUCLEOTIDE SEQUENCE [LARGE SCALE GENOMIC DNA]</scope>
    <source>
        <strain>OS223</strain>
    </source>
</reference>
<dbReference type="EMBL" id="CP001252">
    <property type="protein sequence ID" value="ACK47588.1"/>
    <property type="molecule type" value="Genomic_DNA"/>
</dbReference>
<dbReference type="RefSeq" id="WP_006080788.1">
    <property type="nucleotide sequence ID" value="NC_011663.1"/>
</dbReference>
<dbReference type="SMR" id="B8EBP3"/>
<dbReference type="GeneID" id="11771555"/>
<dbReference type="KEGG" id="sbp:Sbal223_3103"/>
<dbReference type="HOGENOM" id="CLU_100590_5_1_6"/>
<dbReference type="Proteomes" id="UP000002507">
    <property type="component" value="Chromosome"/>
</dbReference>
<dbReference type="GO" id="GO:0005737">
    <property type="term" value="C:cytoplasm"/>
    <property type="evidence" value="ECO:0007669"/>
    <property type="project" value="UniProtKB-ARBA"/>
</dbReference>
<dbReference type="GO" id="GO:0015935">
    <property type="term" value="C:small ribosomal subunit"/>
    <property type="evidence" value="ECO:0007669"/>
    <property type="project" value="TreeGrafter"/>
</dbReference>
<dbReference type="GO" id="GO:0003735">
    <property type="term" value="F:structural constituent of ribosome"/>
    <property type="evidence" value="ECO:0007669"/>
    <property type="project" value="InterPro"/>
</dbReference>
<dbReference type="GO" id="GO:0006412">
    <property type="term" value="P:translation"/>
    <property type="evidence" value="ECO:0007669"/>
    <property type="project" value="UniProtKB-UniRule"/>
</dbReference>
<dbReference type="FunFam" id="3.30.1320.10:FF:000001">
    <property type="entry name" value="30S ribosomal protein S16"/>
    <property type="match status" value="1"/>
</dbReference>
<dbReference type="Gene3D" id="3.30.1320.10">
    <property type="match status" value="1"/>
</dbReference>
<dbReference type="HAMAP" id="MF_00385">
    <property type="entry name" value="Ribosomal_bS16"/>
    <property type="match status" value="1"/>
</dbReference>
<dbReference type="InterPro" id="IPR000307">
    <property type="entry name" value="Ribosomal_bS16"/>
</dbReference>
<dbReference type="InterPro" id="IPR020592">
    <property type="entry name" value="Ribosomal_bS16_CS"/>
</dbReference>
<dbReference type="InterPro" id="IPR023803">
    <property type="entry name" value="Ribosomal_bS16_dom_sf"/>
</dbReference>
<dbReference type="NCBIfam" id="TIGR00002">
    <property type="entry name" value="S16"/>
    <property type="match status" value="1"/>
</dbReference>
<dbReference type="PANTHER" id="PTHR12919">
    <property type="entry name" value="30S RIBOSOMAL PROTEIN S16"/>
    <property type="match status" value="1"/>
</dbReference>
<dbReference type="PANTHER" id="PTHR12919:SF20">
    <property type="entry name" value="SMALL RIBOSOMAL SUBUNIT PROTEIN BS16M"/>
    <property type="match status" value="1"/>
</dbReference>
<dbReference type="Pfam" id="PF00886">
    <property type="entry name" value="Ribosomal_S16"/>
    <property type="match status" value="1"/>
</dbReference>
<dbReference type="SUPFAM" id="SSF54565">
    <property type="entry name" value="Ribosomal protein S16"/>
    <property type="match status" value="1"/>
</dbReference>
<dbReference type="PROSITE" id="PS00732">
    <property type="entry name" value="RIBOSOMAL_S16"/>
    <property type="match status" value="1"/>
</dbReference>
<organism>
    <name type="scientific">Shewanella baltica (strain OS223)</name>
    <dbReference type="NCBI Taxonomy" id="407976"/>
    <lineage>
        <taxon>Bacteria</taxon>
        <taxon>Pseudomonadati</taxon>
        <taxon>Pseudomonadota</taxon>
        <taxon>Gammaproteobacteria</taxon>
        <taxon>Alteromonadales</taxon>
        <taxon>Shewanellaceae</taxon>
        <taxon>Shewanella</taxon>
    </lineage>
</organism>
<feature type="chain" id="PRO_1000134322" description="Small ribosomal subunit protein bS16">
    <location>
        <begin position="1"/>
        <end position="83"/>
    </location>
</feature>
<accession>B8EBP3</accession>
<proteinExistence type="inferred from homology"/>
<keyword id="KW-0687">Ribonucleoprotein</keyword>
<keyword id="KW-0689">Ribosomal protein</keyword>
<comment type="similarity">
    <text evidence="1">Belongs to the bacterial ribosomal protein bS16 family.</text>
</comment>
<name>RS16_SHEB2</name>
<protein>
    <recommendedName>
        <fullName evidence="1">Small ribosomal subunit protein bS16</fullName>
    </recommendedName>
    <alternativeName>
        <fullName evidence="2">30S ribosomal protein S16</fullName>
    </alternativeName>
</protein>
<evidence type="ECO:0000255" key="1">
    <source>
        <dbReference type="HAMAP-Rule" id="MF_00385"/>
    </source>
</evidence>
<evidence type="ECO:0000305" key="2"/>
<sequence>MVTIRLARGGAKKRPFYNIVVADSRNARDGRFIERVGFFNPLARGQEETLRLDLARVEHWVSNGAAATERVAKLIKDARKATA</sequence>
<gene>
    <name evidence="1" type="primary">rpsP</name>
    <name type="ordered locus">Sbal223_3103</name>
</gene>